<protein>
    <recommendedName>
        <fullName evidence="4">2-imino-3-(indol-3-yl)propanoate dimerase</fullName>
        <ecNumber evidence="1 2 3">1.21.98.-</ecNumber>
    </recommendedName>
    <alternativeName>
        <fullName>Catalase</fullName>
        <ecNumber evidence="1 2">1.11.1.6</ecNumber>
    </alternativeName>
    <alternativeName>
        <fullName>Violacein biosynthesis protein VioB</fullName>
    </alternativeName>
</protein>
<comment type="function">
    <text evidence="1 2">Catalyzes the hydrogen peroxide-dependent dimerization of two L-tryptophan-derived molecules (imine form of indole 3-pyruvate (IPA)), to form an uncharacterized product suggested to be indole-3-pyruvate imine dimer that can spontaneously convert into dichlorochromopyrrolate (CPA). The uncharacterized product is the substrate of VioE.</text>
</comment>
<comment type="catalytic activity">
    <reaction evidence="1 2">
        <text>2 H2O2 = O2 + 2 H2O</text>
        <dbReference type="Rhea" id="RHEA:20309"/>
        <dbReference type="ChEBI" id="CHEBI:15377"/>
        <dbReference type="ChEBI" id="CHEBI:15379"/>
        <dbReference type="ChEBI" id="CHEBI:16240"/>
        <dbReference type="EC" id="1.11.1.6"/>
    </reaction>
</comment>
<comment type="catalytic activity">
    <reaction evidence="1 2">
        <text>2 2-iminio-3-(indol-3-yl)propanoate + H2O2 = indole-3-pyruvate imine dimer + 2 H2O</text>
        <dbReference type="Rhea" id="RHEA:51036"/>
        <dbReference type="ChEBI" id="CHEBI:15377"/>
        <dbReference type="ChEBI" id="CHEBI:16240"/>
        <dbReference type="ChEBI" id="CHEBI:59193"/>
        <dbReference type="ChEBI" id="CHEBI:133928"/>
    </reaction>
</comment>
<comment type="pathway">
    <text>Pigment biosynthesis; violacein biosynthesis.</text>
</comment>
<comment type="induction">
    <text>By N-acylhomoserine lactone (AHL).</text>
</comment>
<comment type="biotechnology">
    <text>Violacein production is used as a biosensor for the detection of quorum-sensing AHL production. Violacein possesses antibacterial, antiviral, antimicrobial, antileishmanial, trypanocidal and potential antitumoral activities.</text>
</comment>
<dbReference type="EC" id="1.21.98.-" evidence="1 2 3"/>
<dbReference type="EC" id="1.11.1.6" evidence="1 2"/>
<dbReference type="EMBL" id="AF172851">
    <property type="protein sequence ID" value="AAD51809.1"/>
    <property type="molecule type" value="Genomic_DNA"/>
</dbReference>
<dbReference type="EMBL" id="AB032799">
    <property type="protein sequence ID" value="BAA84783.1"/>
    <property type="molecule type" value="Genomic_DNA"/>
</dbReference>
<dbReference type="EMBL" id="AE016825">
    <property type="protein sequence ID" value="AAQ60937.1"/>
    <property type="molecule type" value="Genomic_DNA"/>
</dbReference>
<dbReference type="RefSeq" id="WP_011136820.1">
    <property type="nucleotide sequence ID" value="NC_005085.1"/>
</dbReference>
<dbReference type="STRING" id="243365.CV_3273"/>
<dbReference type="KEGG" id="cvi:CV_3273"/>
<dbReference type="eggNOG" id="COG1633">
    <property type="taxonomic scope" value="Bacteria"/>
</dbReference>
<dbReference type="HOGENOM" id="CLU_285727_0_0_4"/>
<dbReference type="OrthoDB" id="726375at2"/>
<dbReference type="BioCyc" id="MetaCyc:MONOMER-17362"/>
<dbReference type="UniPathway" id="UPA00309"/>
<dbReference type="Proteomes" id="UP000001424">
    <property type="component" value="Chromosome"/>
</dbReference>
<dbReference type="GO" id="GO:0004096">
    <property type="term" value="F:catalase activity"/>
    <property type="evidence" value="ECO:0007669"/>
    <property type="project" value="UniProtKB-EC"/>
</dbReference>
<dbReference type="GO" id="GO:0017000">
    <property type="term" value="P:antibiotic biosynthetic process"/>
    <property type="evidence" value="ECO:0007669"/>
    <property type="project" value="UniProtKB-KW"/>
</dbReference>
<dbReference type="Gene3D" id="1.20.1260.10">
    <property type="match status" value="1"/>
</dbReference>
<dbReference type="InterPro" id="IPR012347">
    <property type="entry name" value="Ferritin-like"/>
</dbReference>
<dbReference type="InterPro" id="IPR030993">
    <property type="entry name" value="VioB"/>
</dbReference>
<dbReference type="InterPro" id="IPR026820">
    <property type="entry name" value="VioB/RebD_dom"/>
</dbReference>
<dbReference type="NCBIfam" id="TIGR04492">
    <property type="entry name" value="VioB"/>
    <property type="match status" value="1"/>
</dbReference>
<dbReference type="Pfam" id="PF12902">
    <property type="entry name" value="Ferritin-like"/>
    <property type="match status" value="1"/>
</dbReference>
<reference key="1">
    <citation type="journal article" date="2000" name="J. Mol. Microbiol. Biotechnol.">
        <title>Sequence analysis and functional characterization of the violacein biosynthetic pathway from Chromobacterium violaceum.</title>
        <authorList>
            <person name="August P.R."/>
            <person name="Grossman T.H."/>
            <person name="Minor C."/>
            <person name="Draper M.P."/>
            <person name="MacNeil I.A."/>
            <person name="Pemberton J.M."/>
            <person name="Call K.M."/>
            <person name="Holt D."/>
            <person name="Osburne M.S."/>
        </authorList>
    </citation>
    <scope>NUCLEOTIDE SEQUENCE [GENOMIC DNA]</scope>
    <source>
        <strain>UQM51</strain>
    </source>
</reference>
<reference key="2">
    <citation type="submission" date="1999-09" db="EMBL/GenBank/DDBJ databases">
        <title>Biosynthetic gene cluster for violacein pigment.</title>
        <authorList>
            <person name="Hoshino T."/>
        </authorList>
    </citation>
    <scope>NUCLEOTIDE SEQUENCE [GENOMIC DNA]</scope>
    <source>
        <strain>ATCC 12472 / DSM 30191 / JCM 1249 / CCUG 213 / NBRC 12614 / NCIMB 9131 / NCTC 9757 / MK</strain>
    </source>
</reference>
<reference key="3">
    <citation type="journal article" date="2003" name="Proc. Natl. Acad. Sci. U.S.A.">
        <title>The complete genome sequence of Chromobacterium violaceum reveals remarkable and exploitable bacterial adaptability.</title>
        <authorList>
            <person name="Vasconcelos A.T.R."/>
            <person name="de Almeida D.F."/>
            <person name="Hungria M."/>
            <person name="Guimaraes C.T."/>
            <person name="Antonio R.V."/>
            <person name="Almeida F.C."/>
            <person name="de Almeida L.G.P."/>
            <person name="de Almeida R."/>
            <person name="Alves-Gomes J.A."/>
            <person name="Andrade E.M."/>
            <person name="Araripe J."/>
            <person name="de Araujo M.F.F."/>
            <person name="Astolfi-Filho S."/>
            <person name="Azevedo V."/>
            <person name="Baptista A.J."/>
            <person name="Bataus L.A.M."/>
            <person name="Batista J.S."/>
            <person name="Belo A."/>
            <person name="van den Berg C."/>
            <person name="Bogo M."/>
            <person name="Bonatto S."/>
            <person name="Bordignon J."/>
            <person name="Brigido M.M."/>
            <person name="Brito C.A."/>
            <person name="Brocchi M."/>
            <person name="Burity H.A."/>
            <person name="Camargo A.A."/>
            <person name="Cardoso D.D.P."/>
            <person name="Carneiro N.P."/>
            <person name="Carraro D.M."/>
            <person name="Carvalho C.M.B."/>
            <person name="Cascardo J.C.M."/>
            <person name="Cavada B.S."/>
            <person name="Chueire L.M.O."/>
            <person name="Creczynski-Pasa T.B."/>
            <person name="Cunha-Junior N.C."/>
            <person name="Fagundes N."/>
            <person name="Falcao C.L."/>
            <person name="Fantinatti F."/>
            <person name="Farias I.P."/>
            <person name="Felipe M.S.S."/>
            <person name="Ferrari L.P."/>
            <person name="Ferro J.A."/>
            <person name="Ferro M.I.T."/>
            <person name="Franco G.R."/>
            <person name="Freitas N.S.A."/>
            <person name="Furlan L.R."/>
            <person name="Gazzinelli R.T."/>
            <person name="Gomes E.A."/>
            <person name="Goncalves P.R."/>
            <person name="Grangeiro T.B."/>
            <person name="Grattapaglia D."/>
            <person name="Grisard E.C."/>
            <person name="Hanna E.S."/>
            <person name="Jardim S.N."/>
            <person name="Laurino J."/>
            <person name="Leoi L.C.T."/>
            <person name="Lima L.F.A."/>
            <person name="Loureiro M.F."/>
            <person name="Lyra M.C.C.P."/>
            <person name="Madeira H.M.F."/>
            <person name="Manfio G.P."/>
            <person name="Maranhao A.Q."/>
            <person name="Martins W.S."/>
            <person name="di Mauro S.M.Z."/>
            <person name="de Medeiros S.R.B."/>
            <person name="Meissner R.V."/>
            <person name="Moreira M.A.M."/>
            <person name="Nascimento F.F."/>
            <person name="Nicolas M.F."/>
            <person name="Oliveira J.G."/>
            <person name="Oliveira S.C."/>
            <person name="Paixao R.F.C."/>
            <person name="Parente J.A."/>
            <person name="Pedrosa F.O."/>
            <person name="Pena S.D.J."/>
            <person name="Pereira J.O."/>
            <person name="Pereira M."/>
            <person name="Pinto L.S.R.C."/>
            <person name="Pinto L.S."/>
            <person name="Porto J.I.R."/>
            <person name="Potrich D.P."/>
            <person name="Ramalho-Neto C.E."/>
            <person name="Reis A.M.M."/>
            <person name="Rigo L.U."/>
            <person name="Rondinelli E."/>
            <person name="Santos E.B.P."/>
            <person name="Santos F.R."/>
            <person name="Schneider M.P.C."/>
            <person name="Seuanez H.N."/>
            <person name="Silva A.M.R."/>
            <person name="da Silva A.L.C."/>
            <person name="Silva D.W."/>
            <person name="Silva R."/>
            <person name="Simoes I.C."/>
            <person name="Simon D."/>
            <person name="Soares C.M.A."/>
            <person name="Soares R.B.A."/>
            <person name="Souza E.M."/>
            <person name="Souza K.R.L."/>
            <person name="Souza R.C."/>
            <person name="Steffens M.B.R."/>
            <person name="Steindel M."/>
            <person name="Teixeira S.R."/>
            <person name="Urmenyi T."/>
            <person name="Vettore A."/>
            <person name="Wassem R."/>
            <person name="Zaha A."/>
            <person name="Simpson A.J.G."/>
        </authorList>
    </citation>
    <scope>NUCLEOTIDE SEQUENCE [LARGE SCALE GENOMIC DNA]</scope>
    <source>
        <strain>ATCC 12472 / DSM 30191 / JCM 1249 / CCUG 213 / NBRC 12614 / NCIMB 9131 / NCTC 9757 / MK</strain>
    </source>
</reference>
<reference key="4">
    <citation type="journal article" date="2006" name="Biochemistry">
        <title>In vitro biosynthesis of violacein from L-tryptophan by the enzymes VioA-E from Chromobacterium violaceum.</title>
        <authorList>
            <person name="Balibar C.J."/>
            <person name="Walsh C.T."/>
        </authorList>
    </citation>
    <scope>FUNCTION</scope>
    <scope>CATALYTIC ACTIVITY</scope>
    <source>
        <strain>ATCC 12472 / DSM 30191 / JCM 1249 / CCUG 213 / NBRC 12614 / NCIMB 9131 / NCTC 9757 / MK</strain>
    </source>
</reference>
<reference key="5">
    <citation type="journal article" date="2007" name="Chem. Commun. (Camb.)">
        <title>Biosynthesis of violacein: a genuine intermediate, protoviolaceinic acid, produced by VioABDE, and insight into VioC function.</title>
        <authorList>
            <person name="Shinoda K."/>
            <person name="Hasegawa T."/>
            <person name="Sato H."/>
            <person name="Shinozaki M."/>
            <person name="Kuramoto H."/>
            <person name="Takamiya Y."/>
            <person name="Sato T."/>
            <person name="Nikaidou N."/>
            <person name="Watanabe T."/>
            <person name="Hoshino T."/>
        </authorList>
    </citation>
    <scope>FUNCTION</scope>
    <scope>CATALYTIC ACTIVITY</scope>
    <source>
        <strain>ATCC 12472 / DSM 30191 / JCM 1249 / CCUG 213 / NBRC 12614 / NCIMB 9131 / NCTC 9757 / MK</strain>
    </source>
</reference>
<reference key="6">
    <citation type="journal article" date="2011" name="Appl. Microbiol. Biotechnol.">
        <title>Violacein and related tryptophan metabolites produced by Chromobacterium violaceum: biosynthetic mechanism and pathway for construction of violacein core.</title>
        <authorList>
            <person name="Hoshino T."/>
        </authorList>
    </citation>
    <scope>REVIEW</scope>
</reference>
<gene>
    <name type="primary">vioB</name>
    <name type="ordered locus">CV_3273</name>
</gene>
<feature type="chain" id="PRO_0000065832" description="2-imino-3-(indol-3-yl)propanoate dimerase">
    <location>
        <begin position="1"/>
        <end position="998"/>
    </location>
</feature>
<feature type="sequence conflict" description="In Ref. 1; AAD51809." evidence="4" ref="1">
    <original>A</original>
    <variation>T</variation>
    <location>
        <position position="19"/>
    </location>
</feature>
<feature type="sequence conflict" description="In Ref. 1; AAD51809." evidence="4" ref="1">
    <original>R</original>
    <variation>C</variation>
    <location>
        <position position="63"/>
    </location>
</feature>
<feature type="sequence conflict" description="In Ref. 1; AAD51809." evidence="4" ref="1">
    <original>S</original>
    <variation>N</variation>
    <location>
        <position position="94"/>
    </location>
</feature>
<feature type="sequence conflict" description="In Ref. 1; AAD51809." evidence="4" ref="1">
    <original>E</original>
    <variation>G</variation>
    <location>
        <position position="237"/>
    </location>
</feature>
<feature type="sequence conflict" description="In Ref. 2; BAA84783." evidence="4" ref="2">
    <original>S</original>
    <variation>N</variation>
    <location>
        <position position="303"/>
    </location>
</feature>
<feature type="sequence conflict" description="In Ref. 1; AAD51809." evidence="4" ref="1">
    <original>A</original>
    <variation>T</variation>
    <location>
        <position position="314"/>
    </location>
</feature>
<feature type="sequence conflict" description="In Ref. 1; AAD51809." evidence="4" ref="1">
    <original>M</original>
    <variation>L</variation>
    <location>
        <position position="826"/>
    </location>
</feature>
<name>VIOB_CHRVO</name>
<keyword id="KW-0045">Antibiotic biosynthesis</keyword>
<keyword id="KW-0511">Multifunctional enzyme</keyword>
<keyword id="KW-0560">Oxidoreductase</keyword>
<keyword id="KW-1185">Reference proteome</keyword>
<proteinExistence type="evidence at protein level"/>
<sequence>MSILDFPRIHFRGWARVNAPTANRDPHGHIDMASNTVAMAGEPFDLARHPTEFHRHLRSLGPRFGLDGRADPEGPFSLAEGYNAAGNNHFSWESATVSHVQWDGGEADRGDGLVGARLALWGHYNDYLRTTFNRARWVDSDPTRRDAAQIYAGQFTISPAGAGPGTPWLFTADIDDSHGARWTRGGHIAERGGHFLDEEFGLARLFQFSVPKDHPHFLFHPGPFDSEAWRRLQLALEDDDVLGLTVQYALFNMSTPPQPNSPVFHDMVGVVGLWRRGELASYPAGRLLRPRQPGLGDLTLRVSGGRVALNLACAIPFSTRAAQPSAPDRLTPDLGAKLPLGDLLLRDEDGALLARVPQALYQDYWTNHGIVDLPLLREPRGSLTLSSELAEWREQDWVTQSDASNLYLEAPDRRHGRFFPESIALRSYFRGEARARPDIPHRIEGMGLVGVESRQDGDAAEWRLTGLRPGPARIVLDDGAEAIPLRVLPDDWALDDATVEEVDYAFLYRHVMAYYELVYPFMSDKVFSLADRCKCETYARLMWQMCDPQNRNKSYYMPSTRELSAPKARLFLKYLAHVEGQARLQAPPPAGPARIESKAQLAAELRKAVDLELSVMLQYLYAAYSIPNYAQGQQRVRDGAWTAEQLQLACGSGDRRRDGGIRAALLEIAHEEMIHYLVVNNLLMALGEPFYAGVPLMGEAARQAFGLDTEFALEPFSESTLARFVRLEWPHFIPAPGKSIADCYAAIRQAFLDLPDLFGGEAGKRGGEHHLFLNELTNRAHPGYQLEVFDRDSALFGIAFVTDQGEGGALDSPHYEHSHFQRLREMSARIMAQSAPFEPALPALRNPVLDESPGCQRVADGRARALMALYQGVYELMFAMMAQHFAVKPLGSLRRSRLMNAAIDLMTGLLRPLSCALMNLPSGIAGRTAGPPLPGPVDTRSYDDYALGCRMLARRCERLLEQASMLEPGWLPDAQMELLDFYRRQMLDLACGKLSREA</sequence>
<accession>Q9S3V0</accession>
<accession>Q9S0N4</accession>
<evidence type="ECO:0000269" key="1">
    <source>
    </source>
</evidence>
<evidence type="ECO:0000269" key="2">
    <source>
    </source>
</evidence>
<evidence type="ECO:0000303" key="3">
    <source>
    </source>
</evidence>
<evidence type="ECO:0000305" key="4"/>
<organism>
    <name type="scientific">Chromobacterium violaceum (strain ATCC 12472 / DSM 30191 / JCM 1249 / CCUG 213 / NBRC 12614 / NCIMB 9131 / NCTC 9757 / MK)</name>
    <dbReference type="NCBI Taxonomy" id="243365"/>
    <lineage>
        <taxon>Bacteria</taxon>
        <taxon>Pseudomonadati</taxon>
        <taxon>Pseudomonadota</taxon>
        <taxon>Betaproteobacteria</taxon>
        <taxon>Neisseriales</taxon>
        <taxon>Chromobacteriaceae</taxon>
        <taxon>Chromobacterium</taxon>
    </lineage>
</organism>